<keyword id="KW-1185">Reference proteome</keyword>
<keyword id="KW-0687">Ribonucleoprotein</keyword>
<keyword id="KW-0689">Ribosomal protein</keyword>
<keyword id="KW-0694">RNA-binding</keyword>
<keyword id="KW-0699">rRNA-binding</keyword>
<gene>
    <name evidence="1" type="primary">rplJ</name>
    <name type="ordered locus">Noc_2333</name>
</gene>
<comment type="function">
    <text evidence="1">Forms part of the ribosomal stalk, playing a central role in the interaction of the ribosome with GTP-bound translation factors.</text>
</comment>
<comment type="subunit">
    <text evidence="1">Part of the ribosomal stalk of the 50S ribosomal subunit. The N-terminus interacts with L11 and the large rRNA to form the base of the stalk. The C-terminus forms an elongated spine to which L12 dimers bind in a sequential fashion forming a multimeric L10(L12)X complex.</text>
</comment>
<comment type="similarity">
    <text evidence="1">Belongs to the universal ribosomal protein uL10 family.</text>
</comment>
<proteinExistence type="inferred from homology"/>
<organism>
    <name type="scientific">Nitrosococcus oceani (strain ATCC 19707 / BCRC 17464 / JCM 30415 / NCIMB 11848 / C-107)</name>
    <dbReference type="NCBI Taxonomy" id="323261"/>
    <lineage>
        <taxon>Bacteria</taxon>
        <taxon>Pseudomonadati</taxon>
        <taxon>Pseudomonadota</taxon>
        <taxon>Gammaproteobacteria</taxon>
        <taxon>Chromatiales</taxon>
        <taxon>Chromatiaceae</taxon>
        <taxon>Nitrosococcus</taxon>
    </lineage>
</organism>
<sequence length="186" mass="20121">MGKPYIRRQLNLSLNLEAKKAVVAEVAAVASQSHSAVAIEYRGLTVAEITKLRVAARKGDVYLRVVRNTLASRALEGTDFDCMREGLTGPLMLAFSREEPSAAARVIRDFGKEHPKLVVKMGCLGGRLLPPEGVENLAKMPTKEQAVAMLMGVLQAPIGKFARTLAEPTAKLVRTVAAVRDQKQAT</sequence>
<reference key="1">
    <citation type="journal article" date="2006" name="Appl. Environ. Microbiol.">
        <title>Complete genome sequence of the marine, chemolithoautotrophic, ammonia-oxidizing bacterium Nitrosococcus oceani ATCC 19707.</title>
        <authorList>
            <person name="Klotz M.G."/>
            <person name="Arp D.J."/>
            <person name="Chain P.S.G."/>
            <person name="El-Sheikh A.F."/>
            <person name="Hauser L.J."/>
            <person name="Hommes N.G."/>
            <person name="Larimer F.W."/>
            <person name="Malfatti S.A."/>
            <person name="Norton J.M."/>
            <person name="Poret-Peterson A.T."/>
            <person name="Vergez L.M."/>
            <person name="Ward B.B."/>
        </authorList>
    </citation>
    <scope>NUCLEOTIDE SEQUENCE [LARGE SCALE GENOMIC DNA]</scope>
    <source>
        <strain>ATCC 19707 / BCRC 17464 / JCM 30415 / NCIMB 11848 / C-107</strain>
    </source>
</reference>
<accession>Q3J8Q5</accession>
<protein>
    <recommendedName>
        <fullName evidence="1">Large ribosomal subunit protein uL10</fullName>
    </recommendedName>
    <alternativeName>
        <fullName evidence="2">50S ribosomal protein L10</fullName>
    </alternativeName>
</protein>
<dbReference type="EMBL" id="CP000127">
    <property type="protein sequence ID" value="ABA58791.1"/>
    <property type="molecule type" value="Genomic_DNA"/>
</dbReference>
<dbReference type="SMR" id="Q3J8Q5"/>
<dbReference type="FunCoup" id="Q3J8Q5">
    <property type="interactions" value="600"/>
</dbReference>
<dbReference type="STRING" id="323261.Noc_2333"/>
<dbReference type="KEGG" id="noc:Noc_2333"/>
<dbReference type="eggNOG" id="COG0244">
    <property type="taxonomic scope" value="Bacteria"/>
</dbReference>
<dbReference type="HOGENOM" id="CLU_092227_0_1_6"/>
<dbReference type="InParanoid" id="Q3J8Q5"/>
<dbReference type="Proteomes" id="UP000006838">
    <property type="component" value="Chromosome"/>
</dbReference>
<dbReference type="GO" id="GO:0015934">
    <property type="term" value="C:large ribosomal subunit"/>
    <property type="evidence" value="ECO:0007669"/>
    <property type="project" value="InterPro"/>
</dbReference>
<dbReference type="GO" id="GO:0070180">
    <property type="term" value="F:large ribosomal subunit rRNA binding"/>
    <property type="evidence" value="ECO:0007669"/>
    <property type="project" value="UniProtKB-UniRule"/>
</dbReference>
<dbReference type="GO" id="GO:0003735">
    <property type="term" value="F:structural constituent of ribosome"/>
    <property type="evidence" value="ECO:0007669"/>
    <property type="project" value="InterPro"/>
</dbReference>
<dbReference type="GO" id="GO:0006412">
    <property type="term" value="P:translation"/>
    <property type="evidence" value="ECO:0007669"/>
    <property type="project" value="UniProtKB-UniRule"/>
</dbReference>
<dbReference type="CDD" id="cd05797">
    <property type="entry name" value="Ribosomal_L10"/>
    <property type="match status" value="1"/>
</dbReference>
<dbReference type="Gene3D" id="3.30.70.1730">
    <property type="match status" value="1"/>
</dbReference>
<dbReference type="Gene3D" id="6.10.250.290">
    <property type="match status" value="1"/>
</dbReference>
<dbReference type="HAMAP" id="MF_00362">
    <property type="entry name" value="Ribosomal_uL10"/>
    <property type="match status" value="1"/>
</dbReference>
<dbReference type="InterPro" id="IPR001790">
    <property type="entry name" value="Ribosomal_uL10"/>
</dbReference>
<dbReference type="InterPro" id="IPR043141">
    <property type="entry name" value="Ribosomal_uL10-like_sf"/>
</dbReference>
<dbReference type="InterPro" id="IPR022973">
    <property type="entry name" value="Ribosomal_uL10_bac"/>
</dbReference>
<dbReference type="InterPro" id="IPR047865">
    <property type="entry name" value="Ribosomal_uL10_bac_type"/>
</dbReference>
<dbReference type="InterPro" id="IPR002363">
    <property type="entry name" value="Ribosomal_uL10_CS_bac"/>
</dbReference>
<dbReference type="NCBIfam" id="NF000955">
    <property type="entry name" value="PRK00099.1-1"/>
    <property type="match status" value="1"/>
</dbReference>
<dbReference type="PANTHER" id="PTHR11560">
    <property type="entry name" value="39S RIBOSOMAL PROTEIN L10, MITOCHONDRIAL"/>
    <property type="match status" value="1"/>
</dbReference>
<dbReference type="Pfam" id="PF00466">
    <property type="entry name" value="Ribosomal_L10"/>
    <property type="match status" value="1"/>
</dbReference>
<dbReference type="SUPFAM" id="SSF160369">
    <property type="entry name" value="Ribosomal protein L10-like"/>
    <property type="match status" value="1"/>
</dbReference>
<dbReference type="PROSITE" id="PS01109">
    <property type="entry name" value="RIBOSOMAL_L10"/>
    <property type="match status" value="1"/>
</dbReference>
<name>RL10_NITOC</name>
<evidence type="ECO:0000255" key="1">
    <source>
        <dbReference type="HAMAP-Rule" id="MF_00362"/>
    </source>
</evidence>
<evidence type="ECO:0000305" key="2"/>
<feature type="chain" id="PRO_0000234864" description="Large ribosomal subunit protein uL10">
    <location>
        <begin position="1"/>
        <end position="186"/>
    </location>
</feature>